<gene>
    <name type="primary">exgD</name>
    <name type="ORF">ACLA_083150</name>
</gene>
<evidence type="ECO:0000250" key="1"/>
<evidence type="ECO:0000255" key="2"/>
<evidence type="ECO:0000256" key="3">
    <source>
        <dbReference type="SAM" id="MobiDB-lite"/>
    </source>
</evidence>
<evidence type="ECO:0000305" key="4"/>
<keyword id="KW-0119">Carbohydrate metabolism</keyword>
<keyword id="KW-1003">Cell membrane</keyword>
<keyword id="KW-0961">Cell wall biogenesis/degradation</keyword>
<keyword id="KW-0325">Glycoprotein</keyword>
<keyword id="KW-0326">Glycosidase</keyword>
<keyword id="KW-0378">Hydrolase</keyword>
<keyword id="KW-0472">Membrane</keyword>
<keyword id="KW-0624">Polysaccharide degradation</keyword>
<keyword id="KW-1185">Reference proteome</keyword>
<keyword id="KW-0735">Signal-anchor</keyword>
<keyword id="KW-0812">Transmembrane</keyword>
<keyword id="KW-1133">Transmembrane helix</keyword>
<reference key="1">
    <citation type="journal article" date="2008" name="PLoS Genet.">
        <title>Genomic islands in the pathogenic filamentous fungus Aspergillus fumigatus.</title>
        <authorList>
            <person name="Fedorova N.D."/>
            <person name="Khaldi N."/>
            <person name="Joardar V.S."/>
            <person name="Maiti R."/>
            <person name="Amedeo P."/>
            <person name="Anderson M.J."/>
            <person name="Crabtree J."/>
            <person name="Silva J.C."/>
            <person name="Badger J.H."/>
            <person name="Albarraq A."/>
            <person name="Angiuoli S."/>
            <person name="Bussey H."/>
            <person name="Bowyer P."/>
            <person name="Cotty P.J."/>
            <person name="Dyer P.S."/>
            <person name="Egan A."/>
            <person name="Galens K."/>
            <person name="Fraser-Liggett C.M."/>
            <person name="Haas B.J."/>
            <person name="Inman J.M."/>
            <person name="Kent R."/>
            <person name="Lemieux S."/>
            <person name="Malavazi I."/>
            <person name="Orvis J."/>
            <person name="Roemer T."/>
            <person name="Ronning C.M."/>
            <person name="Sundaram J.P."/>
            <person name="Sutton G."/>
            <person name="Turner G."/>
            <person name="Venter J.C."/>
            <person name="White O.R."/>
            <person name="Whitty B.R."/>
            <person name="Youngman P."/>
            <person name="Wolfe K.H."/>
            <person name="Goldman G.H."/>
            <person name="Wortman J.R."/>
            <person name="Jiang B."/>
            <person name="Denning D.W."/>
            <person name="Nierman W.C."/>
        </authorList>
    </citation>
    <scope>NUCLEOTIDE SEQUENCE [LARGE SCALE GENOMIC DNA]</scope>
    <source>
        <strain>ATCC 1007 / CBS 513.65 / DSM 816 / NCTC 3887 / NRRL 1 / QM 1276 / 107</strain>
    </source>
</reference>
<feature type="chain" id="PRO_0000395161" description="Probable glucan 1,3-beta-glucosidase D">
    <location>
        <begin position="1"/>
        <end position="830"/>
    </location>
</feature>
<feature type="topological domain" description="Cytoplasmic" evidence="2">
    <location>
        <begin position="1"/>
        <end position="301"/>
    </location>
</feature>
<feature type="transmembrane region" description="Helical; Signal-anchor for type II membrane protein" evidence="2">
    <location>
        <begin position="302"/>
        <end position="322"/>
    </location>
</feature>
<feature type="topological domain" description="Extracellular" evidence="2">
    <location>
        <begin position="323"/>
        <end position="830"/>
    </location>
</feature>
<feature type="region of interest" description="Disordered" evidence="3">
    <location>
        <begin position="1"/>
        <end position="279"/>
    </location>
</feature>
<feature type="region of interest" description="Disordered" evidence="3">
    <location>
        <begin position="327"/>
        <end position="351"/>
    </location>
</feature>
<feature type="compositionally biased region" description="Basic and acidic residues" evidence="3">
    <location>
        <begin position="1"/>
        <end position="34"/>
    </location>
</feature>
<feature type="compositionally biased region" description="Acidic residues" evidence="3">
    <location>
        <begin position="35"/>
        <end position="51"/>
    </location>
</feature>
<feature type="compositionally biased region" description="Basic and acidic residues" evidence="3">
    <location>
        <begin position="52"/>
        <end position="98"/>
    </location>
</feature>
<feature type="compositionally biased region" description="Basic and acidic residues" evidence="3">
    <location>
        <begin position="110"/>
        <end position="175"/>
    </location>
</feature>
<feature type="compositionally biased region" description="Low complexity" evidence="3">
    <location>
        <begin position="181"/>
        <end position="194"/>
    </location>
</feature>
<feature type="compositionally biased region" description="Basic and acidic residues" evidence="3">
    <location>
        <begin position="198"/>
        <end position="215"/>
    </location>
</feature>
<feature type="compositionally biased region" description="Basic and acidic residues" evidence="3">
    <location>
        <begin position="228"/>
        <end position="243"/>
    </location>
</feature>
<feature type="compositionally biased region" description="Basic and acidic residues" evidence="3">
    <location>
        <begin position="253"/>
        <end position="264"/>
    </location>
</feature>
<feature type="compositionally biased region" description="Polar residues" evidence="3">
    <location>
        <begin position="330"/>
        <end position="348"/>
    </location>
</feature>
<feature type="active site" description="Proton donor" evidence="1">
    <location>
        <position position="597"/>
    </location>
</feature>
<feature type="active site" description="Nucleophile" evidence="1">
    <location>
        <position position="701"/>
    </location>
</feature>
<feature type="glycosylation site" description="N-linked (GlcNAc...) asparagine" evidence="2">
    <location>
        <position position="331"/>
    </location>
</feature>
<feature type="glycosylation site" description="N-linked (GlcNAc...) asparagine" evidence="2">
    <location>
        <position position="376"/>
    </location>
</feature>
<feature type="glycosylation site" description="N-linked (GlcNAc...) asparagine" evidence="2">
    <location>
        <position position="381"/>
    </location>
</feature>
<feature type="glycosylation site" description="N-linked (GlcNAc...) asparagine" evidence="2">
    <location>
        <position position="393"/>
    </location>
</feature>
<feature type="glycosylation site" description="N-linked (GlcNAc...) asparagine" evidence="2">
    <location>
        <position position="546"/>
    </location>
</feature>
<feature type="glycosylation site" description="N-linked (GlcNAc...) asparagine" evidence="2">
    <location>
        <position position="558"/>
    </location>
</feature>
<feature type="glycosylation site" description="N-linked (GlcNAc...) asparagine" evidence="2">
    <location>
        <position position="610"/>
    </location>
</feature>
<feature type="glycosylation site" description="N-linked (GlcNAc...) asparagine" evidence="2">
    <location>
        <position position="636"/>
    </location>
</feature>
<feature type="glycosylation site" description="N-linked (GlcNAc...) asparagine" evidence="2">
    <location>
        <position position="669"/>
    </location>
</feature>
<feature type="glycosylation site" description="N-linked (GlcNAc...) asparagine" evidence="2">
    <location>
        <position position="689"/>
    </location>
</feature>
<proteinExistence type="inferred from homology"/>
<organism>
    <name type="scientific">Aspergillus clavatus (strain ATCC 1007 / CBS 513.65 / DSM 816 / NCTC 3887 / NRRL 1 / QM 1276 / 107)</name>
    <dbReference type="NCBI Taxonomy" id="344612"/>
    <lineage>
        <taxon>Eukaryota</taxon>
        <taxon>Fungi</taxon>
        <taxon>Dikarya</taxon>
        <taxon>Ascomycota</taxon>
        <taxon>Pezizomycotina</taxon>
        <taxon>Eurotiomycetes</taxon>
        <taxon>Eurotiomycetidae</taxon>
        <taxon>Eurotiales</taxon>
        <taxon>Aspergillaceae</taxon>
        <taxon>Aspergillus</taxon>
        <taxon>Aspergillus subgen. Fumigati</taxon>
    </lineage>
</organism>
<accession>A1CTI3</accession>
<dbReference type="EC" id="3.2.1.58"/>
<dbReference type="EMBL" id="DS027060">
    <property type="protein sequence ID" value="EAW06620.1"/>
    <property type="molecule type" value="Genomic_DNA"/>
</dbReference>
<dbReference type="RefSeq" id="XP_001268046.1">
    <property type="nucleotide sequence ID" value="XM_001268045.1"/>
</dbReference>
<dbReference type="SMR" id="A1CTI3"/>
<dbReference type="STRING" id="344612.A1CTI3"/>
<dbReference type="GlyCosmos" id="A1CTI3">
    <property type="glycosylation" value="10 sites, No reported glycans"/>
</dbReference>
<dbReference type="EnsemblFungi" id="EAW06620">
    <property type="protein sequence ID" value="EAW06620"/>
    <property type="gene ID" value="ACLA_083150"/>
</dbReference>
<dbReference type="GeneID" id="4700413"/>
<dbReference type="KEGG" id="act:ACLA_083150"/>
<dbReference type="VEuPathDB" id="FungiDB:ACLA_083150"/>
<dbReference type="eggNOG" id="ENOG502QRG8">
    <property type="taxonomic scope" value="Eukaryota"/>
</dbReference>
<dbReference type="HOGENOM" id="CLU_004624_4_2_1"/>
<dbReference type="OMA" id="WYWTWKT"/>
<dbReference type="OrthoDB" id="62120at2759"/>
<dbReference type="Proteomes" id="UP000006701">
    <property type="component" value="Unassembled WGS sequence"/>
</dbReference>
<dbReference type="GO" id="GO:0009986">
    <property type="term" value="C:cell surface"/>
    <property type="evidence" value="ECO:0007669"/>
    <property type="project" value="TreeGrafter"/>
</dbReference>
<dbReference type="GO" id="GO:0005576">
    <property type="term" value="C:extracellular region"/>
    <property type="evidence" value="ECO:0007669"/>
    <property type="project" value="TreeGrafter"/>
</dbReference>
<dbReference type="GO" id="GO:0005886">
    <property type="term" value="C:plasma membrane"/>
    <property type="evidence" value="ECO:0007669"/>
    <property type="project" value="UniProtKB-SubCell"/>
</dbReference>
<dbReference type="GO" id="GO:0004338">
    <property type="term" value="F:glucan exo-1,3-beta-glucosidase activity"/>
    <property type="evidence" value="ECO:0007669"/>
    <property type="project" value="UniProtKB-EC"/>
</dbReference>
<dbReference type="GO" id="GO:0071555">
    <property type="term" value="P:cell wall organization"/>
    <property type="evidence" value="ECO:0007669"/>
    <property type="project" value="UniProtKB-KW"/>
</dbReference>
<dbReference type="GO" id="GO:0009251">
    <property type="term" value="P:glucan catabolic process"/>
    <property type="evidence" value="ECO:0007669"/>
    <property type="project" value="TreeGrafter"/>
</dbReference>
<dbReference type="FunFam" id="3.20.20.80:FF:000033">
    <property type="entry name" value="Glucan 1,3-beta-glucosidase A"/>
    <property type="match status" value="1"/>
</dbReference>
<dbReference type="Gene3D" id="3.20.20.80">
    <property type="entry name" value="Glycosidases"/>
    <property type="match status" value="1"/>
</dbReference>
<dbReference type="InterPro" id="IPR001547">
    <property type="entry name" value="Glyco_hydro_5"/>
</dbReference>
<dbReference type="InterPro" id="IPR017853">
    <property type="entry name" value="Glycoside_hydrolase_SF"/>
</dbReference>
<dbReference type="InterPro" id="IPR050386">
    <property type="entry name" value="Glycosyl_hydrolase_5"/>
</dbReference>
<dbReference type="PANTHER" id="PTHR31297:SF34">
    <property type="entry name" value="GLUCAN 1,3-BETA-GLUCOSIDASE 2"/>
    <property type="match status" value="1"/>
</dbReference>
<dbReference type="PANTHER" id="PTHR31297">
    <property type="entry name" value="GLUCAN ENDO-1,6-BETA-GLUCOSIDASE B"/>
    <property type="match status" value="1"/>
</dbReference>
<dbReference type="Pfam" id="PF00150">
    <property type="entry name" value="Cellulase"/>
    <property type="match status" value="1"/>
</dbReference>
<dbReference type="SUPFAM" id="SSF51445">
    <property type="entry name" value="(Trans)glycosidases"/>
    <property type="match status" value="1"/>
</dbReference>
<sequence length="830" mass="94264">MPSQSRSRDRYRGRDTEYTRRRYPDEHDYSHDDHDYDYDDDDDDNDDLEQDVTERRYRRDGYRRPRGESRARAYYERDAAAAAAHDEELLAEERERRRAGASGSPRKSGQHRERDRDRERDREAQSRRRTYEDDGRHRTRDGRRERRREGGGEGGRRERRRGESRRGEAARKHQSSDSTNSASHLLSADALARLGSQYEKEDRRERAHAKDAAKAERKRRKKRAVVGEQERGLRAEKPRDRSRARVASGAYMEEGRGPEMEFRRRGGGGPPMDARWPKGGGWGGSVDGGDAGRPFWKQKKWLIGIGVVILILVIVIPVAVVVSKKHNDKPNATTTQPDGTTPSNSNLDGLSPDSIPGYAKGTFLDPWTWYDTNDFNVTFTNETVGGLSLMGLNSTWDDSARPNDNVPPLNKPFPYGKQPIRGVNLGGWLSLEPFITPSFFQSYSALSGVIDEYTLTQKLGSTAGARLEKHYATFITEQDFADIRDAGLDHVRIQYSYWAVTTYDGDPYVAKTSWRYLLRAIEYCRKYGLRVKLDPHGIPGSQNGWNHSGRQGAIGWLNGTDGELNRKRSLEVHDQVSKFFAQDRYKNVVTIYGLVNEPLMLSLSVEDVLNWTVEATKLVQKNGITAYIALHDGFLNLSKWKSILKTRPDNMLLDTHQYTIFNTGQIVLNHTARVNLICNDWSAMIKEVNSTSGFGPTICGEWSQADTDCAQYLNNVGRGTRWEGTFSLTDSTQYCPTADSGPRCSCANANADPSAYSADYKKFLQTYAEAQMSAFETGQGWFYWTWRTESAAQWSYRTAWKGGFMPQKAYSPSFKCGDTVPDFGSLPEYY</sequence>
<protein>
    <recommendedName>
        <fullName>Probable glucan 1,3-beta-glucosidase D</fullName>
        <ecNumber>3.2.1.58</ecNumber>
    </recommendedName>
    <alternativeName>
        <fullName>Exo-1,3-beta-glucanase D</fullName>
    </alternativeName>
</protein>
<name>EXGD_ASPCL</name>
<comment type="function">
    <text evidence="1">Glucosidase involved in the degradation of cellulosic biomass. Active on lichenan (By similarity).</text>
</comment>
<comment type="catalytic activity">
    <reaction>
        <text>Successive hydrolysis of beta-D-glucose units from the non-reducing ends of (1-&gt;3)-beta-D-glucans, releasing alpha-glucose.</text>
        <dbReference type="EC" id="3.2.1.58"/>
    </reaction>
</comment>
<comment type="subcellular location">
    <subcellularLocation>
        <location evidence="4">Cell membrane</location>
        <topology evidence="4">Single-pass type II membrane protein</topology>
    </subcellularLocation>
</comment>
<comment type="similarity">
    <text evidence="4">Belongs to the glycosyl hydrolase 5 (cellulase A) family.</text>
</comment>